<reference key="1">
    <citation type="submission" date="2000-12" db="EMBL/GenBank/DDBJ databases">
        <title>Unknown protein homolog to murine RS21-C6.</title>
        <authorList>
            <person name="Zhang J."/>
            <person name="Wang H."/>
            <person name="Chen W.-F."/>
        </authorList>
    </citation>
    <scope>NUCLEOTIDE SEQUENCE [LARGE SCALE MRNA]</scope>
    <source>
        <tissue>Spleen</tissue>
    </source>
</reference>
<keyword id="KW-0007">Acetylation</keyword>
<keyword id="KW-0963">Cytoplasm</keyword>
<keyword id="KW-0378">Hydrolase</keyword>
<keyword id="KW-0460">Magnesium</keyword>
<keyword id="KW-0479">Metal-binding</keyword>
<keyword id="KW-0597">Phosphoprotein</keyword>
<keyword id="KW-1185">Reference proteome</keyword>
<protein>
    <recommendedName>
        <fullName>dCTP pyrophosphatase 1</fullName>
        <ecNumber evidence="2">3.6.1.12</ecNumber>
    </recommendedName>
    <alternativeName>
        <fullName>Deoxycytidine-triphosphatase 1</fullName>
        <shortName>dCTPase 1</shortName>
    </alternativeName>
    <alternativeName>
        <fullName evidence="4">RS21-C6</fullName>
    </alternativeName>
</protein>
<dbReference type="EC" id="3.6.1.12" evidence="2"/>
<dbReference type="EMBL" id="AY029335">
    <property type="protein sequence ID" value="AAK37408.1"/>
    <property type="molecule type" value="mRNA"/>
</dbReference>
<dbReference type="EMBL" id="AF331839">
    <property type="protein sequence ID" value="AAK38638.1"/>
    <property type="molecule type" value="mRNA"/>
</dbReference>
<dbReference type="RefSeq" id="NP_620247.1">
    <property type="nucleotide sequence ID" value="NM_138892.1"/>
</dbReference>
<dbReference type="SMR" id="Q91VC0"/>
<dbReference type="FunCoup" id="Q91VC0">
    <property type="interactions" value="1161"/>
</dbReference>
<dbReference type="STRING" id="10116.ENSRNOP00000024074"/>
<dbReference type="PhosphoSitePlus" id="Q91VC0"/>
<dbReference type="jPOST" id="Q91VC0"/>
<dbReference type="PaxDb" id="10116-ENSRNOP00000024074"/>
<dbReference type="Ensembl" id="ENSRNOT00000024074.5">
    <property type="protein sequence ID" value="ENSRNOP00000024074.2"/>
    <property type="gene ID" value="ENSRNOG00000017850.5"/>
</dbReference>
<dbReference type="GeneID" id="192252"/>
<dbReference type="KEGG" id="rno:192252"/>
<dbReference type="UCSC" id="RGD:620933">
    <property type="organism name" value="rat"/>
</dbReference>
<dbReference type="AGR" id="RGD:620933"/>
<dbReference type="CTD" id="79077"/>
<dbReference type="RGD" id="620933">
    <property type="gene designation" value="Dctpp1"/>
</dbReference>
<dbReference type="eggNOG" id="ENOG502S210">
    <property type="taxonomic scope" value="Eukaryota"/>
</dbReference>
<dbReference type="GeneTree" id="ENSGT00390000017709"/>
<dbReference type="HOGENOM" id="CLU_110454_0_1_1"/>
<dbReference type="InParanoid" id="Q91VC0"/>
<dbReference type="OMA" id="FRDERNW"/>
<dbReference type="OrthoDB" id="411123at2759"/>
<dbReference type="PhylomeDB" id="Q91VC0"/>
<dbReference type="TreeFam" id="TF300237"/>
<dbReference type="PRO" id="PR:Q91VC0"/>
<dbReference type="Proteomes" id="UP000002494">
    <property type="component" value="Chromosome 1"/>
</dbReference>
<dbReference type="Bgee" id="ENSRNOG00000017850">
    <property type="expression patterns" value="Expressed in pancreas and 20 other cell types or tissues"/>
</dbReference>
<dbReference type="GO" id="GO:0005829">
    <property type="term" value="C:cytosol"/>
    <property type="evidence" value="ECO:0000250"/>
    <property type="project" value="UniProtKB"/>
</dbReference>
<dbReference type="GO" id="GO:0005739">
    <property type="term" value="C:mitochondrion"/>
    <property type="evidence" value="ECO:0000250"/>
    <property type="project" value="UniProtKB"/>
</dbReference>
<dbReference type="GO" id="GO:0005634">
    <property type="term" value="C:nucleus"/>
    <property type="evidence" value="ECO:0000250"/>
    <property type="project" value="UniProtKB"/>
</dbReference>
<dbReference type="GO" id="GO:0047840">
    <property type="term" value="F:dCTP diphosphatase activity"/>
    <property type="evidence" value="ECO:0000250"/>
    <property type="project" value="UniProtKB"/>
</dbReference>
<dbReference type="GO" id="GO:0042802">
    <property type="term" value="F:identical protein binding"/>
    <property type="evidence" value="ECO:0000266"/>
    <property type="project" value="RGD"/>
</dbReference>
<dbReference type="GO" id="GO:0000287">
    <property type="term" value="F:magnesium ion binding"/>
    <property type="evidence" value="ECO:0000250"/>
    <property type="project" value="UniProtKB"/>
</dbReference>
<dbReference type="GO" id="GO:0047429">
    <property type="term" value="F:nucleoside triphosphate diphosphatase activity"/>
    <property type="evidence" value="ECO:0000250"/>
    <property type="project" value="UniProtKB"/>
</dbReference>
<dbReference type="GO" id="GO:0032556">
    <property type="term" value="F:pyrimidine deoxyribonucleotide binding"/>
    <property type="evidence" value="ECO:0000266"/>
    <property type="project" value="RGD"/>
</dbReference>
<dbReference type="GO" id="GO:0016462">
    <property type="term" value="F:pyrophosphatase activity"/>
    <property type="evidence" value="ECO:0000266"/>
    <property type="project" value="RGD"/>
</dbReference>
<dbReference type="GO" id="GO:0006253">
    <property type="term" value="P:dCTP catabolic process"/>
    <property type="evidence" value="ECO:0000250"/>
    <property type="project" value="UniProtKB"/>
</dbReference>
<dbReference type="GO" id="GO:0042262">
    <property type="term" value="P:DNA protection"/>
    <property type="evidence" value="ECO:0000250"/>
    <property type="project" value="UniProtKB"/>
</dbReference>
<dbReference type="GO" id="GO:0009143">
    <property type="term" value="P:nucleoside triphosphate catabolic process"/>
    <property type="evidence" value="ECO:0000250"/>
    <property type="project" value="UniProtKB"/>
</dbReference>
<dbReference type="CDD" id="cd11537">
    <property type="entry name" value="NTP-PPase_RS21-C6_like"/>
    <property type="match status" value="1"/>
</dbReference>
<dbReference type="FunFam" id="1.10.287.1080:FF:000004">
    <property type="entry name" value="dCTP pyrophosphatase 1"/>
    <property type="match status" value="1"/>
</dbReference>
<dbReference type="Gene3D" id="1.10.287.1080">
    <property type="entry name" value="MazG-like"/>
    <property type="match status" value="1"/>
</dbReference>
<dbReference type="InterPro" id="IPR052555">
    <property type="entry name" value="dCTP_Pyrophosphatase"/>
</dbReference>
<dbReference type="InterPro" id="IPR025984">
    <property type="entry name" value="DCTPP"/>
</dbReference>
<dbReference type="PANTHER" id="PTHR46523">
    <property type="entry name" value="DCTP PYROPHOSPHATASE 1"/>
    <property type="match status" value="1"/>
</dbReference>
<dbReference type="PANTHER" id="PTHR46523:SF1">
    <property type="entry name" value="DCTP PYROPHOSPHATASE 1"/>
    <property type="match status" value="1"/>
</dbReference>
<dbReference type="Pfam" id="PF12643">
    <property type="entry name" value="MazG-like"/>
    <property type="match status" value="1"/>
</dbReference>
<dbReference type="SUPFAM" id="SSF101386">
    <property type="entry name" value="all-alpha NTP pyrophosphatases"/>
    <property type="match status" value="1"/>
</dbReference>
<organism>
    <name type="scientific">Rattus norvegicus</name>
    <name type="common">Rat</name>
    <dbReference type="NCBI Taxonomy" id="10116"/>
    <lineage>
        <taxon>Eukaryota</taxon>
        <taxon>Metazoa</taxon>
        <taxon>Chordata</taxon>
        <taxon>Craniata</taxon>
        <taxon>Vertebrata</taxon>
        <taxon>Euteleostomi</taxon>
        <taxon>Mammalia</taxon>
        <taxon>Eutheria</taxon>
        <taxon>Euarchontoglires</taxon>
        <taxon>Glires</taxon>
        <taxon>Rodentia</taxon>
        <taxon>Myomorpha</taxon>
        <taxon>Muroidea</taxon>
        <taxon>Muridae</taxon>
        <taxon>Murinae</taxon>
        <taxon>Rattus</taxon>
    </lineage>
</organism>
<gene>
    <name evidence="5" type="primary">Dctpp1</name>
</gene>
<accession>Q91VC0</accession>
<feature type="initiator methionine" description="Removed" evidence="1">
    <location>
        <position position="1"/>
    </location>
</feature>
<feature type="chain" id="PRO_0000291771" description="dCTP pyrophosphatase 1">
    <location>
        <begin position="2"/>
        <end position="170"/>
    </location>
</feature>
<feature type="region of interest" description="Disordered" evidence="3">
    <location>
        <begin position="1"/>
        <end position="25"/>
    </location>
</feature>
<feature type="region of interest" description="Disordered" evidence="3">
    <location>
        <begin position="149"/>
        <end position="170"/>
    </location>
</feature>
<feature type="binding site" evidence="2">
    <location>
        <position position="38"/>
    </location>
    <ligand>
        <name>substrate</name>
    </ligand>
</feature>
<feature type="binding site" evidence="2">
    <location>
        <begin position="47"/>
        <end position="51"/>
    </location>
    <ligand>
        <name>substrate</name>
    </ligand>
</feature>
<feature type="binding site" evidence="2">
    <location>
        <position position="63"/>
    </location>
    <ligand>
        <name>Mg(2+)</name>
        <dbReference type="ChEBI" id="CHEBI:18420"/>
    </ligand>
</feature>
<feature type="binding site" evidence="2">
    <location>
        <position position="66"/>
    </location>
    <ligand>
        <name>Mg(2+)</name>
        <dbReference type="ChEBI" id="CHEBI:18420"/>
    </ligand>
</feature>
<feature type="binding site" evidence="2">
    <location>
        <position position="73"/>
    </location>
    <ligand>
        <name>substrate</name>
    </ligand>
</feature>
<feature type="binding site" evidence="2">
    <location>
        <position position="95"/>
    </location>
    <ligand>
        <name>Mg(2+)</name>
        <dbReference type="ChEBI" id="CHEBI:18420"/>
    </ligand>
</feature>
<feature type="binding site" evidence="2">
    <location>
        <position position="98"/>
    </location>
    <ligand>
        <name>Mg(2+)</name>
        <dbReference type="ChEBI" id="CHEBI:18420"/>
    </ligand>
</feature>
<feature type="binding site" evidence="2">
    <location>
        <position position="102"/>
    </location>
    <ligand>
        <name>substrate</name>
    </ligand>
</feature>
<feature type="modified residue" description="N-acetylserine" evidence="1">
    <location>
        <position position="2"/>
    </location>
</feature>
<feature type="modified residue" description="Phosphoserine" evidence="1">
    <location>
        <position position="2"/>
    </location>
</feature>
<proteinExistence type="evidence at transcript level"/>
<comment type="function">
    <text evidence="1">Hydrolyzes deoxynucleoside triphosphates (dNTPs) to the corresponding nucleoside monophosphates. Has a strong preference for dCTP and its analogs including 5-iodo-dCTP and 5-methyl-dCTP for which it may even have a higher efficiency. May protect DNA or RNA against the incorporation of these genotoxic nucleotide analogs through their catabolism.</text>
</comment>
<comment type="catalytic activity">
    <reaction evidence="2">
        <text>dCTP + H2O = dCMP + diphosphate + H(+)</text>
        <dbReference type="Rhea" id="RHEA:22636"/>
        <dbReference type="ChEBI" id="CHEBI:15377"/>
        <dbReference type="ChEBI" id="CHEBI:15378"/>
        <dbReference type="ChEBI" id="CHEBI:33019"/>
        <dbReference type="ChEBI" id="CHEBI:57566"/>
        <dbReference type="ChEBI" id="CHEBI:61481"/>
        <dbReference type="EC" id="3.6.1.12"/>
    </reaction>
</comment>
<comment type="cofactor">
    <cofactor evidence="2">
        <name>Mg(2+)</name>
        <dbReference type="ChEBI" id="CHEBI:18420"/>
    </cofactor>
    <text evidence="2">Probably binds two or three Mg(2+) ions per subunit.</text>
</comment>
<comment type="subunit">
    <text evidence="2">Homotetramer.</text>
</comment>
<comment type="subcellular location">
    <subcellularLocation>
        <location evidence="1">Cytoplasm</location>
        <location evidence="1">Cytosol</location>
    </subcellularLocation>
    <text evidence="1">May also localize to mitochondrion and nucleus.</text>
</comment>
<name>DCTP1_RAT</name>
<evidence type="ECO:0000250" key="1">
    <source>
        <dbReference type="UniProtKB" id="Q9H773"/>
    </source>
</evidence>
<evidence type="ECO:0000250" key="2">
    <source>
        <dbReference type="UniProtKB" id="Q9QY93"/>
    </source>
</evidence>
<evidence type="ECO:0000256" key="3">
    <source>
        <dbReference type="SAM" id="MobiDB-lite"/>
    </source>
</evidence>
<evidence type="ECO:0000312" key="4">
    <source>
        <dbReference type="EMBL" id="AAK37408.1"/>
    </source>
</evidence>
<evidence type="ECO:0000312" key="5">
    <source>
        <dbReference type="RGD" id="620933"/>
    </source>
</evidence>
<sequence>MSQAGTGVCGNGGQEDSAAAGPFSFSPEPTLEDIRRLHAEFAAERDWEQFHQPRNLLLALVGEVGELAELFQWKSDAEPGPQAWQPKERAALQEELSDVLIYLVALAARCHVDLPRAVISKMDTNRQRYPVHLSRGSACKYTDLPRGTLSENEAVGSGDPASELGNQAST</sequence>